<protein>
    <recommendedName>
        <fullName evidence="1">Trigger factor</fullName>
        <shortName evidence="1">TF</shortName>
        <ecNumber evidence="1">5.2.1.8</ecNumber>
    </recommendedName>
    <alternativeName>
        <fullName evidence="1">PPIase</fullName>
    </alternativeName>
</protein>
<sequence>MEVKELERDKNRVVLEYVFGAEEIAQAEDKAVRYLNQRVEIPGFRKGRIPKNVLKMKLGEEFQEYTLDFLMDLIPDTLKDRKLILSPIVTERELKDVTARVVVEVHEEPEVRIGDISKIEVEKVDEEKVLEKYVERRIEDLRESHALLEPKEGPAEAGDLVRVNMEVYNEEEKKLTSREYEYVISEDEDRPFVKDLVGKKKGDVVEIEREYEGKKYTYKLEVEEVYKRTLPEIGDELAKSVNNEFETLEQLKESLKKEGKEIYDVEMKESMREQLLEKLPEIVEIEISDRTLEILVNEAINRLKREGRYEQIVSSYESEEKFREELKERILDDIKRDRVIEVLAQEKGISVNDEELEKEAEELAPFWGISPDRAKSLVKARQDLREELRWAILKRKVLDLLLQEVKVKVVEPKGEGDDSEGKEDN</sequence>
<organism>
    <name type="scientific">Thermotoga petrophila (strain ATCC BAA-488 / DSM 13995 / JCM 10881 / RKU-1)</name>
    <dbReference type="NCBI Taxonomy" id="390874"/>
    <lineage>
        <taxon>Bacteria</taxon>
        <taxon>Thermotogati</taxon>
        <taxon>Thermotogota</taxon>
        <taxon>Thermotogae</taxon>
        <taxon>Thermotogales</taxon>
        <taxon>Thermotogaceae</taxon>
        <taxon>Thermotoga</taxon>
    </lineage>
</organism>
<proteinExistence type="inferred from homology"/>
<name>TIG_THEP1</name>
<keyword id="KW-0131">Cell cycle</keyword>
<keyword id="KW-0132">Cell division</keyword>
<keyword id="KW-0143">Chaperone</keyword>
<keyword id="KW-0963">Cytoplasm</keyword>
<keyword id="KW-0413">Isomerase</keyword>
<keyword id="KW-0697">Rotamase</keyword>
<comment type="function">
    <text evidence="1">Involved in protein export. Acts as a chaperone by maintaining the newly synthesized protein in an open conformation. Functions as a peptidyl-prolyl cis-trans isomerase.</text>
</comment>
<comment type="catalytic activity">
    <reaction evidence="1">
        <text>[protein]-peptidylproline (omega=180) = [protein]-peptidylproline (omega=0)</text>
        <dbReference type="Rhea" id="RHEA:16237"/>
        <dbReference type="Rhea" id="RHEA-COMP:10747"/>
        <dbReference type="Rhea" id="RHEA-COMP:10748"/>
        <dbReference type="ChEBI" id="CHEBI:83833"/>
        <dbReference type="ChEBI" id="CHEBI:83834"/>
        <dbReference type="EC" id="5.2.1.8"/>
    </reaction>
</comment>
<comment type="subcellular location">
    <subcellularLocation>
        <location>Cytoplasm</location>
    </subcellularLocation>
    <text evidence="1">About half TF is bound to the ribosome near the polypeptide exit tunnel while the other half is free in the cytoplasm.</text>
</comment>
<comment type="domain">
    <text evidence="1">Consists of 3 domains; the N-terminus binds the ribosome, the middle domain has PPIase activity, while the C-terminus has intrinsic chaperone activity on its own.</text>
</comment>
<comment type="similarity">
    <text evidence="1">Belongs to the FKBP-type PPIase family. Tig subfamily.</text>
</comment>
<gene>
    <name evidence="1" type="primary">tig</name>
    <name type="ordered locus">Tpet_0236</name>
</gene>
<reference key="1">
    <citation type="submission" date="2007-05" db="EMBL/GenBank/DDBJ databases">
        <title>Complete sequence of Thermotoga petrophila RKU-1.</title>
        <authorList>
            <consortium name="US DOE Joint Genome Institute"/>
            <person name="Copeland A."/>
            <person name="Lucas S."/>
            <person name="Lapidus A."/>
            <person name="Barry K."/>
            <person name="Glavina del Rio T."/>
            <person name="Dalin E."/>
            <person name="Tice H."/>
            <person name="Pitluck S."/>
            <person name="Sims D."/>
            <person name="Brettin T."/>
            <person name="Bruce D."/>
            <person name="Detter J.C."/>
            <person name="Han C."/>
            <person name="Tapia R."/>
            <person name="Schmutz J."/>
            <person name="Larimer F."/>
            <person name="Land M."/>
            <person name="Hauser L."/>
            <person name="Kyrpides N."/>
            <person name="Mikhailova N."/>
            <person name="Nelson K."/>
            <person name="Gogarten J.P."/>
            <person name="Noll K."/>
            <person name="Richardson P."/>
        </authorList>
    </citation>
    <scope>NUCLEOTIDE SEQUENCE [LARGE SCALE GENOMIC DNA]</scope>
    <source>
        <strain>ATCC BAA-488 / DSM 13995 / JCM 10881 / RKU-1</strain>
    </source>
</reference>
<evidence type="ECO:0000255" key="1">
    <source>
        <dbReference type="HAMAP-Rule" id="MF_00303"/>
    </source>
</evidence>
<feature type="chain" id="PRO_1000022777" description="Trigger factor">
    <location>
        <begin position="1"/>
        <end position="425"/>
    </location>
</feature>
<feature type="domain" description="PPIase FKBP-type" evidence="1">
    <location>
        <begin position="158"/>
        <end position="231"/>
    </location>
</feature>
<accession>A5IJ92</accession>
<dbReference type="EC" id="5.2.1.8" evidence="1"/>
<dbReference type="EMBL" id="CP000702">
    <property type="protein sequence ID" value="ABQ46265.1"/>
    <property type="molecule type" value="Genomic_DNA"/>
</dbReference>
<dbReference type="RefSeq" id="WP_011942908.1">
    <property type="nucleotide sequence ID" value="NC_009486.1"/>
</dbReference>
<dbReference type="SMR" id="A5IJ92"/>
<dbReference type="STRING" id="390874.Tpet_0236"/>
<dbReference type="KEGG" id="tpt:Tpet_0236"/>
<dbReference type="eggNOG" id="COG0544">
    <property type="taxonomic scope" value="Bacteria"/>
</dbReference>
<dbReference type="HOGENOM" id="CLU_033058_3_1_0"/>
<dbReference type="Proteomes" id="UP000006558">
    <property type="component" value="Chromosome"/>
</dbReference>
<dbReference type="GO" id="GO:0005737">
    <property type="term" value="C:cytoplasm"/>
    <property type="evidence" value="ECO:0007669"/>
    <property type="project" value="UniProtKB-SubCell"/>
</dbReference>
<dbReference type="GO" id="GO:0003677">
    <property type="term" value="F:DNA binding"/>
    <property type="evidence" value="ECO:0007669"/>
    <property type="project" value="InterPro"/>
</dbReference>
<dbReference type="GO" id="GO:0003755">
    <property type="term" value="F:peptidyl-prolyl cis-trans isomerase activity"/>
    <property type="evidence" value="ECO:0007669"/>
    <property type="project" value="UniProtKB-UniRule"/>
</dbReference>
<dbReference type="GO" id="GO:0051301">
    <property type="term" value="P:cell division"/>
    <property type="evidence" value="ECO:0007669"/>
    <property type="project" value="UniProtKB-KW"/>
</dbReference>
<dbReference type="GO" id="GO:0006457">
    <property type="term" value="P:protein folding"/>
    <property type="evidence" value="ECO:0007669"/>
    <property type="project" value="UniProtKB-UniRule"/>
</dbReference>
<dbReference type="GO" id="GO:0015031">
    <property type="term" value="P:protein transport"/>
    <property type="evidence" value="ECO:0007669"/>
    <property type="project" value="UniProtKB-UniRule"/>
</dbReference>
<dbReference type="GO" id="GO:0032784">
    <property type="term" value="P:regulation of DNA-templated transcription elongation"/>
    <property type="evidence" value="ECO:0007669"/>
    <property type="project" value="InterPro"/>
</dbReference>
<dbReference type="Gene3D" id="3.10.50.30">
    <property type="entry name" value="Transcription elongation factor, GreA/GreB, C-terminal domain"/>
    <property type="match status" value="1"/>
</dbReference>
<dbReference type="Gene3D" id="3.30.70.1050">
    <property type="entry name" value="Trigger factor ribosome-binding domain"/>
    <property type="match status" value="1"/>
</dbReference>
<dbReference type="Gene3D" id="1.10.3120.10">
    <property type="entry name" value="Trigger factor, C-terminal domain"/>
    <property type="match status" value="1"/>
</dbReference>
<dbReference type="HAMAP" id="MF_00303">
    <property type="entry name" value="Trigger_factor_Tig"/>
    <property type="match status" value="1"/>
</dbReference>
<dbReference type="InterPro" id="IPR036953">
    <property type="entry name" value="GreA/GreB_C_sf"/>
</dbReference>
<dbReference type="InterPro" id="IPR005215">
    <property type="entry name" value="Trig_fac"/>
</dbReference>
<dbReference type="InterPro" id="IPR008880">
    <property type="entry name" value="Trigger_fac_C"/>
</dbReference>
<dbReference type="InterPro" id="IPR037041">
    <property type="entry name" value="Trigger_fac_C_sf"/>
</dbReference>
<dbReference type="InterPro" id="IPR008881">
    <property type="entry name" value="Trigger_fac_ribosome-bd_bac"/>
</dbReference>
<dbReference type="InterPro" id="IPR036611">
    <property type="entry name" value="Trigger_fac_ribosome-bd_sf"/>
</dbReference>
<dbReference type="InterPro" id="IPR027304">
    <property type="entry name" value="Trigger_fact/SurA_dom_sf"/>
</dbReference>
<dbReference type="NCBIfam" id="TIGR00115">
    <property type="entry name" value="tig"/>
    <property type="match status" value="1"/>
</dbReference>
<dbReference type="Pfam" id="PF05698">
    <property type="entry name" value="Trigger_C"/>
    <property type="match status" value="1"/>
</dbReference>
<dbReference type="Pfam" id="PF05697">
    <property type="entry name" value="Trigger_N"/>
    <property type="match status" value="1"/>
</dbReference>
<dbReference type="PIRSF" id="PIRSF003095">
    <property type="entry name" value="Trigger_factor"/>
    <property type="match status" value="1"/>
</dbReference>
<dbReference type="SUPFAM" id="SSF54534">
    <property type="entry name" value="FKBP-like"/>
    <property type="match status" value="1"/>
</dbReference>
<dbReference type="SUPFAM" id="SSF109998">
    <property type="entry name" value="Triger factor/SurA peptide-binding domain-like"/>
    <property type="match status" value="1"/>
</dbReference>
<dbReference type="SUPFAM" id="SSF102735">
    <property type="entry name" value="Trigger factor ribosome-binding domain"/>
    <property type="match status" value="1"/>
</dbReference>